<name>ARCA_TREDE</name>
<reference key="1">
    <citation type="journal article" date="2004" name="Proc. Natl. Acad. Sci. U.S.A.">
        <title>Comparison of the genome of the oral pathogen Treponema denticola with other spirochete genomes.</title>
        <authorList>
            <person name="Seshadri R."/>
            <person name="Myers G.S.A."/>
            <person name="Tettelin H."/>
            <person name="Eisen J.A."/>
            <person name="Heidelberg J.F."/>
            <person name="Dodson R.J."/>
            <person name="Davidsen T.M."/>
            <person name="DeBoy R.T."/>
            <person name="Fouts D.E."/>
            <person name="Haft D.H."/>
            <person name="Selengut J."/>
            <person name="Ren Q."/>
            <person name="Brinkac L.M."/>
            <person name="Madupu R."/>
            <person name="Kolonay J.F."/>
            <person name="Durkin S.A."/>
            <person name="Daugherty S.C."/>
            <person name="Shetty J."/>
            <person name="Shvartsbeyn A."/>
            <person name="Gebregeorgis E."/>
            <person name="Geer K."/>
            <person name="Tsegaye G."/>
            <person name="Malek J.A."/>
            <person name="Ayodeji B."/>
            <person name="Shatsman S."/>
            <person name="McLeod M.P."/>
            <person name="Smajs D."/>
            <person name="Howell J.K."/>
            <person name="Pal S."/>
            <person name="Amin A."/>
            <person name="Vashisth P."/>
            <person name="McNeill T.Z."/>
            <person name="Xiang Q."/>
            <person name="Sodergren E."/>
            <person name="Baca E."/>
            <person name="Weinstock G.M."/>
            <person name="Norris S.J."/>
            <person name="Fraser C.M."/>
            <person name="Paulsen I.T."/>
        </authorList>
    </citation>
    <scope>NUCLEOTIDE SEQUENCE [LARGE SCALE GENOMIC DNA]</scope>
    <source>
        <strain>ATCC 35405 / DSM 14222 / CIP 103919 / JCM 8153 / KCTC 15104</strain>
    </source>
</reference>
<keyword id="KW-0056">Arginine metabolism</keyword>
<keyword id="KW-0963">Cytoplasm</keyword>
<keyword id="KW-0378">Hydrolase</keyword>
<keyword id="KW-1185">Reference proteome</keyword>
<comment type="catalytic activity">
    <reaction evidence="1">
        <text>L-arginine + H2O = L-citrulline + NH4(+)</text>
        <dbReference type="Rhea" id="RHEA:19597"/>
        <dbReference type="ChEBI" id="CHEBI:15377"/>
        <dbReference type="ChEBI" id="CHEBI:28938"/>
        <dbReference type="ChEBI" id="CHEBI:32682"/>
        <dbReference type="ChEBI" id="CHEBI:57743"/>
        <dbReference type="EC" id="3.5.3.6"/>
    </reaction>
</comment>
<comment type="pathway">
    <text evidence="1">Amino-acid degradation; L-arginine degradation via ADI pathway; carbamoyl phosphate from L-arginine: step 1/2.</text>
</comment>
<comment type="subcellular location">
    <subcellularLocation>
        <location evidence="1">Cytoplasm</location>
    </subcellularLocation>
</comment>
<comment type="similarity">
    <text evidence="1">Belongs to the arginine deiminase family.</text>
</comment>
<feature type="chain" id="PRO_0000182253" description="Arginine deiminase">
    <location>
        <begin position="1"/>
        <end position="410"/>
    </location>
</feature>
<feature type="active site" description="Amidino-cysteine intermediate" evidence="1">
    <location>
        <position position="399"/>
    </location>
</feature>
<dbReference type="EC" id="3.5.3.6" evidence="1"/>
<dbReference type="EMBL" id="AE017226">
    <property type="protein sequence ID" value="AAS10946.1"/>
    <property type="molecule type" value="Genomic_DNA"/>
</dbReference>
<dbReference type="RefSeq" id="NP_971065.1">
    <property type="nucleotide sequence ID" value="NC_002967.9"/>
</dbReference>
<dbReference type="RefSeq" id="WP_002681549.1">
    <property type="nucleotide sequence ID" value="NC_002967.9"/>
</dbReference>
<dbReference type="SMR" id="Q73QJ2"/>
<dbReference type="STRING" id="243275.TDE_0451"/>
<dbReference type="PaxDb" id="243275-TDE_0451"/>
<dbReference type="GeneID" id="2740748"/>
<dbReference type="KEGG" id="tde:TDE_0451"/>
<dbReference type="PATRIC" id="fig|243275.7.peg.438"/>
<dbReference type="eggNOG" id="COG2235">
    <property type="taxonomic scope" value="Bacteria"/>
</dbReference>
<dbReference type="HOGENOM" id="CLU_052662_0_1_12"/>
<dbReference type="OrthoDB" id="9807502at2"/>
<dbReference type="UniPathway" id="UPA00254">
    <property type="reaction ID" value="UER00364"/>
</dbReference>
<dbReference type="Proteomes" id="UP000008212">
    <property type="component" value="Chromosome"/>
</dbReference>
<dbReference type="GO" id="GO:0005737">
    <property type="term" value="C:cytoplasm"/>
    <property type="evidence" value="ECO:0007669"/>
    <property type="project" value="UniProtKB-SubCell"/>
</dbReference>
<dbReference type="GO" id="GO:0016990">
    <property type="term" value="F:arginine deiminase activity"/>
    <property type="evidence" value="ECO:0007669"/>
    <property type="project" value="UniProtKB-UniRule"/>
</dbReference>
<dbReference type="GO" id="GO:0019547">
    <property type="term" value="P:arginine catabolic process to ornithine"/>
    <property type="evidence" value="ECO:0007669"/>
    <property type="project" value="UniProtKB-UniRule"/>
</dbReference>
<dbReference type="GO" id="GO:0019546">
    <property type="term" value="P:arginine deiminase pathway"/>
    <property type="evidence" value="ECO:0007669"/>
    <property type="project" value="TreeGrafter"/>
</dbReference>
<dbReference type="Gene3D" id="1.10.3930.10">
    <property type="entry name" value="Arginine deiminase"/>
    <property type="match status" value="1"/>
</dbReference>
<dbReference type="Gene3D" id="3.75.10.10">
    <property type="entry name" value="L-arginine/glycine Amidinotransferase, Chain A"/>
    <property type="match status" value="1"/>
</dbReference>
<dbReference type="HAMAP" id="MF_00242">
    <property type="entry name" value="Arg_deiminase"/>
    <property type="match status" value="1"/>
</dbReference>
<dbReference type="InterPro" id="IPR003876">
    <property type="entry name" value="Arg_deiminase"/>
</dbReference>
<dbReference type="NCBIfam" id="TIGR01078">
    <property type="entry name" value="arcA"/>
    <property type="match status" value="1"/>
</dbReference>
<dbReference type="NCBIfam" id="NF002381">
    <property type="entry name" value="PRK01388.1"/>
    <property type="match status" value="1"/>
</dbReference>
<dbReference type="PANTHER" id="PTHR47271">
    <property type="entry name" value="ARGININE DEIMINASE"/>
    <property type="match status" value="1"/>
</dbReference>
<dbReference type="PANTHER" id="PTHR47271:SF2">
    <property type="entry name" value="ARGININE DEIMINASE"/>
    <property type="match status" value="1"/>
</dbReference>
<dbReference type="Pfam" id="PF02274">
    <property type="entry name" value="ADI"/>
    <property type="match status" value="1"/>
</dbReference>
<dbReference type="PIRSF" id="PIRSF006356">
    <property type="entry name" value="Arg_deiminase"/>
    <property type="match status" value="1"/>
</dbReference>
<dbReference type="PRINTS" id="PR01466">
    <property type="entry name" value="ARGDEIMINASE"/>
</dbReference>
<dbReference type="SUPFAM" id="SSF55909">
    <property type="entry name" value="Pentein"/>
    <property type="match status" value="1"/>
</dbReference>
<evidence type="ECO:0000255" key="1">
    <source>
        <dbReference type="HAMAP-Rule" id="MF_00242"/>
    </source>
</evidence>
<gene>
    <name evidence="1" type="primary">arcA</name>
    <name type="ordered locus">TDE_0451</name>
</gene>
<accession>Q73QJ2</accession>
<protein>
    <recommendedName>
        <fullName evidence="1">Arginine deiminase</fullName>
        <shortName evidence="1">ADI</shortName>
        <ecNumber evidence="1">3.5.3.6</ecNumber>
    </recommendedName>
    <alternativeName>
        <fullName evidence="1">Arginine dihydrolase</fullName>
        <shortName evidence="1">AD</shortName>
    </alternativeName>
</protein>
<proteinExistence type="inferred from homology"/>
<sequence length="410" mass="46115">MAVINVTSEIGKLKKVLLHRPGKELLNLTPDKLDELLFDDIPFLKMAQKEHDAFADILSKNGVEVVYLEDLAAEAVSQSAEIREKFIKQYINEADIYSEYYQKMIYDFLNAIKDPKELILKTMEGVNANEIPFKNTHSLSHYVLDSGSMVINPMPNLYFTRDPFACIGNGVSLNKMYSVTRCRETIYGEYIFDHHPEYAGKVNRFYNRYDAPSIEGGDILNIGKDVLAIGLSQRTSANAIDSIANNIFDNETSPIKTVLAFQIPAIRAFMHLDTVFTQIDFDKFTIHPGILGPLRVFEITRGTKKGELNVKQIDSTLEKVLEKYTGAGKIELIQCAGGDKIAAEREQWNDGSNTLCISPGTIVVYERNDVTNEILNKKGLKVLEMPCGELSRGRGGPRCMSMPLLREDIR</sequence>
<organism>
    <name type="scientific">Treponema denticola (strain ATCC 35405 / DSM 14222 / CIP 103919 / JCM 8153 / KCTC 15104)</name>
    <dbReference type="NCBI Taxonomy" id="243275"/>
    <lineage>
        <taxon>Bacteria</taxon>
        <taxon>Pseudomonadati</taxon>
        <taxon>Spirochaetota</taxon>
        <taxon>Spirochaetia</taxon>
        <taxon>Spirochaetales</taxon>
        <taxon>Treponemataceae</taxon>
        <taxon>Treponema</taxon>
    </lineage>
</organism>